<name>YAP1_RAT</name>
<keyword id="KW-0010">Activator</keyword>
<keyword id="KW-0025">Alternative splicing</keyword>
<keyword id="KW-0965">Cell junction</keyword>
<keyword id="KW-1003">Cell membrane</keyword>
<keyword id="KW-0175">Coiled coil</keyword>
<keyword id="KW-0963">Cytoplasm</keyword>
<keyword id="KW-0472">Membrane</keyword>
<keyword id="KW-0539">Nucleus</keyword>
<keyword id="KW-0597">Phosphoprotein</keyword>
<keyword id="KW-0656">Proto-oncogene</keyword>
<keyword id="KW-1185">Reference proteome</keyword>
<keyword id="KW-0677">Repeat</keyword>
<keyword id="KW-0678">Repressor</keyword>
<keyword id="KW-0796">Tight junction</keyword>
<keyword id="KW-0804">Transcription</keyword>
<keyword id="KW-0805">Transcription regulation</keyword>
<keyword id="KW-0832">Ubl conjugation</keyword>
<sequence>MEPAQQPPPQPAPQGPAPPSVSPAGTPAAPPAPPAGHQVVHVRGDSETDLEALFNAVMNPKTANVPQTVPMRLRKLPDSFFKPPEPKSHSRQASTDAGTAGALTPQHVRAHSSPASLQLGAGTLTASGVVSGPAATPAAQHLRQSSFEIPDDVPLPAGWEMAKTSSGQRYFLNHNDQTTTWQDPRKAMLSQLNVPTSASPAVPQTLMNSASGPLPDGWEQAMTQDGEVYYINHKNKTTSWLDPRLDPRFAMNQRITQSAPVKQPPPLAPQSPQGGVLGGGSSNQQQQIQLQQLQMEKERLRLKQQELFRQELALRSQLPSLEQDGGTQNAVSSPGMTQELRTMTTNSSDPFLNSGTYHSRDESTDSGLSMSSYSIPRTPDDFLNSVDEMDTGDTISQSTLPSQQSRFPDYLEALPGTNVDLGTLEGDAMNIEGEELMPSLQEALSSEILDVESVLAATKLDKESFLTWL</sequence>
<reference key="1">
    <citation type="journal article" date="2006" name="J. Cell Biol.">
        <title>Transcriptional repression induces a slowly progressive atypical neuronal death associated with changes of YAP isoforms and p73.</title>
        <authorList>
            <person name="Hoshino M."/>
            <person name="Qi M.-L."/>
            <person name="Yoshimura N."/>
            <person name="Tagawa K."/>
            <person name="Wada Y.-I."/>
            <person name="Enokido Y."/>
            <person name="Marubuchi S."/>
            <person name="Harjes P."/>
            <person name="Arai N."/>
            <person name="Oyanagi K."/>
            <person name="Blandino G."/>
            <person name="Sudol M."/>
            <person name="Rich T."/>
            <person name="Kanazawa I."/>
            <person name="Wanker E.E."/>
            <person name="Saitoe M."/>
            <person name="Okazawa H."/>
        </authorList>
    </citation>
    <scope>NUCLEOTIDE SEQUENCE [MRNA] (ISOFORMS 1; 2; 3 AND 4)</scope>
    <scope>FUNCTION</scope>
    <scope>INDUCTION</scope>
    <scope>TISSUE SPECIFICITY</scope>
    <source>
        <strain>Wistar</strain>
    </source>
</reference>
<reference key="2">
    <citation type="journal article" date="2006" name="Proc. Natl. Acad. Sci. U.S.A.">
        <title>Quantitative phosphoproteomics of vasopressin-sensitive renal cells: regulation of aquaporin-2 phosphorylation at two sites.</title>
        <authorList>
            <person name="Hoffert J.D."/>
            <person name="Pisitkun T."/>
            <person name="Wang G."/>
            <person name="Shen R.-F."/>
            <person name="Knepper M.A."/>
        </authorList>
    </citation>
    <scope>PHOSPHORYLATION [LARGE SCALE ANALYSIS] AT SER-94 AND THR-95</scope>
    <scope>IDENTIFICATION BY MASS SPECTROMETRY [LARGE SCALE ANALYSIS]</scope>
</reference>
<reference key="3">
    <citation type="journal article" date="2012" name="Nat. Commun.">
        <title>Quantitative maps of protein phosphorylation sites across 14 different rat organs and tissues.</title>
        <authorList>
            <person name="Lundby A."/>
            <person name="Secher A."/>
            <person name="Lage K."/>
            <person name="Nordsborg N.B."/>
            <person name="Dmytriyev A."/>
            <person name="Lundby C."/>
            <person name="Olsen J.V."/>
        </authorList>
    </citation>
    <scope>PHOSPHORYLATION [LARGE SCALE ANALYSIS] AT SER-46; SER-90; SER-94; THR-104 AND SER-320</scope>
    <scope>IDENTIFICATION BY MASS SPECTROMETRY [LARGE SCALE ANALYSIS]</scope>
</reference>
<gene>
    <name type="primary">Yap1</name>
    <name type="synonym">Yap</name>
    <name type="synonym">Yap65</name>
</gene>
<proteinExistence type="evidence at protein level"/>
<organism>
    <name type="scientific">Rattus norvegicus</name>
    <name type="common">Rat</name>
    <dbReference type="NCBI Taxonomy" id="10116"/>
    <lineage>
        <taxon>Eukaryota</taxon>
        <taxon>Metazoa</taxon>
        <taxon>Chordata</taxon>
        <taxon>Craniata</taxon>
        <taxon>Vertebrata</taxon>
        <taxon>Euteleostomi</taxon>
        <taxon>Mammalia</taxon>
        <taxon>Eutheria</taxon>
        <taxon>Euarchontoglires</taxon>
        <taxon>Glires</taxon>
        <taxon>Rodentia</taxon>
        <taxon>Myomorpha</taxon>
        <taxon>Muroidea</taxon>
        <taxon>Muridae</taxon>
        <taxon>Murinae</taxon>
        <taxon>Rattus</taxon>
    </lineage>
</organism>
<accession>Q2EJA0</accession>
<accession>Q3LRU4</accession>
<accession>Q3LRU5</accession>
<accession>Q3LRU6</accession>
<dbReference type="EMBL" id="DQ186896">
    <property type="protein sequence ID" value="ABA33615.2"/>
    <property type="molecule type" value="mRNA"/>
</dbReference>
<dbReference type="EMBL" id="DQ186897">
    <property type="protein sequence ID" value="ABA33616.2"/>
    <property type="molecule type" value="mRNA"/>
</dbReference>
<dbReference type="EMBL" id="DQ186898">
    <property type="protein sequence ID" value="ABA33617.2"/>
    <property type="molecule type" value="mRNA"/>
</dbReference>
<dbReference type="EMBL" id="DQ376007">
    <property type="protein sequence ID" value="ABD32155.1"/>
    <property type="molecule type" value="mRNA"/>
</dbReference>
<dbReference type="RefSeq" id="NP_001029174.2">
    <property type="nucleotide sequence ID" value="NM_001034002.2"/>
</dbReference>
<dbReference type="RefSeq" id="NP_001381258.1">
    <molecule id="Q2EJA0-1"/>
    <property type="nucleotide sequence ID" value="NM_001394329.1"/>
</dbReference>
<dbReference type="RefSeq" id="XP_006242555.1">
    <property type="nucleotide sequence ID" value="XM_006242493.3"/>
</dbReference>
<dbReference type="SMR" id="Q2EJA0"/>
<dbReference type="FunCoup" id="Q2EJA0">
    <property type="interactions" value="1680"/>
</dbReference>
<dbReference type="STRING" id="10116.ENSRNOP00000008074"/>
<dbReference type="GlyGen" id="Q2EJA0">
    <property type="glycosylation" value="3 sites, 1 O-linked glycan (1 site)"/>
</dbReference>
<dbReference type="iPTMnet" id="Q2EJA0"/>
<dbReference type="PhosphoSitePlus" id="Q2EJA0"/>
<dbReference type="PaxDb" id="10116-ENSRNOP00000034369"/>
<dbReference type="Ensembl" id="ENSRNOT00000008074.8">
    <molecule id="Q2EJA0-4"/>
    <property type="protein sequence ID" value="ENSRNOP00000008074.8"/>
    <property type="gene ID" value="ENSRNOG00000005933.9"/>
</dbReference>
<dbReference type="Ensembl" id="ENSRNOT00000087278.2">
    <molecule id="Q2EJA0-3"/>
    <property type="protein sequence ID" value="ENSRNOP00000071631.2"/>
    <property type="gene ID" value="ENSRNOG00000005933.9"/>
</dbReference>
<dbReference type="GeneID" id="363014"/>
<dbReference type="UCSC" id="RGD:1306035">
    <molecule id="Q2EJA0-1"/>
    <property type="organism name" value="rat"/>
</dbReference>
<dbReference type="AGR" id="RGD:1306035"/>
<dbReference type="RGD" id="1306035">
    <property type="gene designation" value="Yap1"/>
</dbReference>
<dbReference type="VEuPathDB" id="HostDB:ENSRNOG00000005933"/>
<dbReference type="eggNOG" id="KOG0940">
    <property type="taxonomic scope" value="Eukaryota"/>
</dbReference>
<dbReference type="GeneTree" id="ENSGT00510000046760"/>
<dbReference type="InParanoid" id="Q2EJA0"/>
<dbReference type="Reactome" id="R-RNO-1251985">
    <property type="pathway name" value="Nuclear signaling by ERBB4"/>
</dbReference>
<dbReference type="Reactome" id="R-RNO-2028269">
    <property type="pathway name" value="Signaling by Hippo"/>
</dbReference>
<dbReference type="Reactome" id="R-RNO-2032785">
    <property type="pathway name" value="YAP1- and WWTR1 (TAZ)-stimulated gene expression"/>
</dbReference>
<dbReference type="Reactome" id="R-RNO-8939236">
    <property type="pathway name" value="RUNX1 regulates transcription of genes involved in differentiation of HSCs"/>
</dbReference>
<dbReference type="Reactome" id="R-RNO-8951671">
    <property type="pathway name" value="RUNX3 regulates YAP1-mediated transcription"/>
</dbReference>
<dbReference type="Reactome" id="R-RNO-9860927">
    <property type="pathway name" value="Turbulent (oscillatory, disturbed) flow shear stress activates signaling by PIEZO1 and integrins in endothelial cells"/>
</dbReference>
<dbReference type="PRO" id="PR:Q2EJA0"/>
<dbReference type="Proteomes" id="UP000002494">
    <property type="component" value="Chromosome 8"/>
</dbReference>
<dbReference type="Bgee" id="ENSRNOG00000005933">
    <property type="expression patterns" value="Expressed in esophagus and 18 other cell types or tissues"/>
</dbReference>
<dbReference type="ExpressionAtlas" id="Q2EJA0">
    <property type="expression patterns" value="baseline and differential"/>
</dbReference>
<dbReference type="GO" id="GO:0005923">
    <property type="term" value="C:bicellular tight junction"/>
    <property type="evidence" value="ECO:0007669"/>
    <property type="project" value="UniProtKB-SubCell"/>
</dbReference>
<dbReference type="GO" id="GO:0005911">
    <property type="term" value="C:cell-cell junction"/>
    <property type="evidence" value="ECO:0000250"/>
    <property type="project" value="UniProtKB"/>
</dbReference>
<dbReference type="GO" id="GO:0005737">
    <property type="term" value="C:cytoplasm"/>
    <property type="evidence" value="ECO:0000250"/>
    <property type="project" value="UniProtKB"/>
</dbReference>
<dbReference type="GO" id="GO:0005829">
    <property type="term" value="C:cytosol"/>
    <property type="evidence" value="ECO:0000266"/>
    <property type="project" value="RGD"/>
</dbReference>
<dbReference type="GO" id="GO:0001674">
    <property type="term" value="C:female germ cell nucleus"/>
    <property type="evidence" value="ECO:0000266"/>
    <property type="project" value="RGD"/>
</dbReference>
<dbReference type="GO" id="GO:0016020">
    <property type="term" value="C:membrane"/>
    <property type="evidence" value="ECO:0000266"/>
    <property type="project" value="RGD"/>
</dbReference>
<dbReference type="GO" id="GO:0005654">
    <property type="term" value="C:nucleoplasm"/>
    <property type="evidence" value="ECO:0000304"/>
    <property type="project" value="Reactome"/>
</dbReference>
<dbReference type="GO" id="GO:0005634">
    <property type="term" value="C:nucleus"/>
    <property type="evidence" value="ECO:0000250"/>
    <property type="project" value="UniProtKB"/>
</dbReference>
<dbReference type="GO" id="GO:0005886">
    <property type="term" value="C:plasma membrane"/>
    <property type="evidence" value="ECO:0000266"/>
    <property type="project" value="RGD"/>
</dbReference>
<dbReference type="GO" id="GO:0140552">
    <property type="term" value="C:TEAD-YAP complex"/>
    <property type="evidence" value="ECO:0000266"/>
    <property type="project" value="RGD"/>
</dbReference>
<dbReference type="GO" id="GO:0070160">
    <property type="term" value="C:tight junction"/>
    <property type="evidence" value="ECO:0000266"/>
    <property type="project" value="RGD"/>
</dbReference>
<dbReference type="GO" id="GO:0005667">
    <property type="term" value="C:transcription regulator complex"/>
    <property type="evidence" value="ECO:0000266"/>
    <property type="project" value="RGD"/>
</dbReference>
<dbReference type="GO" id="GO:0003682">
    <property type="term" value="F:chromatin binding"/>
    <property type="evidence" value="ECO:0000266"/>
    <property type="project" value="RGD"/>
</dbReference>
<dbReference type="GO" id="GO:0140297">
    <property type="term" value="F:DNA-binding transcription factor binding"/>
    <property type="evidence" value="ECO:0000266"/>
    <property type="project" value="RGD"/>
</dbReference>
<dbReference type="GO" id="GO:0070064">
    <property type="term" value="F:proline-rich region binding"/>
    <property type="evidence" value="ECO:0000266"/>
    <property type="project" value="RGD"/>
</dbReference>
<dbReference type="GO" id="GO:0000978">
    <property type="term" value="F:RNA polymerase II cis-regulatory region sequence-specific DNA binding"/>
    <property type="evidence" value="ECO:0000266"/>
    <property type="project" value="RGD"/>
</dbReference>
<dbReference type="GO" id="GO:0000976">
    <property type="term" value="F:transcription cis-regulatory region binding"/>
    <property type="evidence" value="ECO:0000250"/>
    <property type="project" value="UniProtKB"/>
</dbReference>
<dbReference type="GO" id="GO:0003713">
    <property type="term" value="F:transcription coactivator activity"/>
    <property type="evidence" value="ECO:0000250"/>
    <property type="project" value="UniProtKB"/>
</dbReference>
<dbReference type="GO" id="GO:0003712">
    <property type="term" value="F:transcription coregulator activity"/>
    <property type="evidence" value="ECO:0000266"/>
    <property type="project" value="RGD"/>
</dbReference>
<dbReference type="GO" id="GO:0003714">
    <property type="term" value="F:transcription corepressor activity"/>
    <property type="evidence" value="ECO:0000266"/>
    <property type="project" value="RGD"/>
</dbReference>
<dbReference type="GO" id="GO:0001824">
    <property type="term" value="P:blastocyst development"/>
    <property type="evidence" value="ECO:0000266"/>
    <property type="project" value="RGD"/>
</dbReference>
<dbReference type="GO" id="GO:0060449">
    <property type="term" value="P:bud elongation involved in lung branching"/>
    <property type="evidence" value="ECO:0000266"/>
    <property type="project" value="RGD"/>
</dbReference>
<dbReference type="GO" id="GO:0060070">
    <property type="term" value="P:canonical Wnt signaling pathway"/>
    <property type="evidence" value="ECO:0000266"/>
    <property type="project" value="RGD"/>
</dbReference>
<dbReference type="GO" id="GO:0061026">
    <property type="term" value="P:cardiac muscle tissue regeneration"/>
    <property type="evidence" value="ECO:0000266"/>
    <property type="project" value="RGD"/>
</dbReference>
<dbReference type="GO" id="GO:0000902">
    <property type="term" value="P:cell morphogenesis"/>
    <property type="evidence" value="ECO:0000266"/>
    <property type="project" value="RGD"/>
</dbReference>
<dbReference type="GO" id="GO:0008283">
    <property type="term" value="P:cell population proliferation"/>
    <property type="evidence" value="ECO:0000266"/>
    <property type="project" value="RGD"/>
</dbReference>
<dbReference type="GO" id="GO:0071480">
    <property type="term" value="P:cellular response to gamma radiation"/>
    <property type="evidence" value="ECO:0000250"/>
    <property type="project" value="UniProtKB"/>
</dbReference>
<dbReference type="GO" id="GO:0071300">
    <property type="term" value="P:cellular response to retinoic acid"/>
    <property type="evidence" value="ECO:0000266"/>
    <property type="project" value="RGD"/>
</dbReference>
<dbReference type="GO" id="GO:0006974">
    <property type="term" value="P:DNA damage response"/>
    <property type="evidence" value="ECO:0000266"/>
    <property type="project" value="RGD"/>
</dbReference>
<dbReference type="GO" id="GO:0003143">
    <property type="term" value="P:embryonic heart tube morphogenesis"/>
    <property type="evidence" value="ECO:0000266"/>
    <property type="project" value="RGD"/>
</dbReference>
<dbReference type="GO" id="GO:1903703">
    <property type="term" value="P:enterocyte differentiation"/>
    <property type="evidence" value="ECO:0000266"/>
    <property type="project" value="RGD"/>
</dbReference>
<dbReference type="GO" id="GO:0050673">
    <property type="term" value="P:epithelial cell proliferation"/>
    <property type="evidence" value="ECO:0000250"/>
    <property type="project" value="UniProtKB"/>
</dbReference>
<dbReference type="GO" id="GO:0097191">
    <property type="term" value="P:extrinsic apoptotic signaling pathway"/>
    <property type="evidence" value="ECO:0000266"/>
    <property type="project" value="RGD"/>
</dbReference>
<dbReference type="GO" id="GO:0002067">
    <property type="term" value="P:glandular epithelial cell differentiation"/>
    <property type="evidence" value="ECO:0000266"/>
    <property type="project" value="RGD"/>
</dbReference>
<dbReference type="GO" id="GO:0003015">
    <property type="term" value="P:heart process"/>
    <property type="evidence" value="ECO:0000266"/>
    <property type="project" value="RGD"/>
</dbReference>
<dbReference type="GO" id="GO:0035329">
    <property type="term" value="P:hippo signaling"/>
    <property type="evidence" value="ECO:0000266"/>
    <property type="project" value="RGD"/>
</dbReference>
<dbReference type="GO" id="GO:0070102">
    <property type="term" value="P:interleukin-6-mediated signaling pathway"/>
    <property type="evidence" value="ECO:0000266"/>
    <property type="project" value="RGD"/>
</dbReference>
<dbReference type="GO" id="GO:0060576">
    <property type="term" value="P:intestinal epithelial cell development"/>
    <property type="evidence" value="ECO:0000266"/>
    <property type="project" value="RGD"/>
</dbReference>
<dbReference type="GO" id="GO:0060575">
    <property type="term" value="P:intestinal epithelial cell differentiation"/>
    <property type="evidence" value="ECO:0000266"/>
    <property type="project" value="RGD"/>
</dbReference>
<dbReference type="GO" id="GO:0030216">
    <property type="term" value="P:keratinocyte differentiation"/>
    <property type="evidence" value="ECO:0000266"/>
    <property type="project" value="RGD"/>
</dbReference>
<dbReference type="GO" id="GO:0048368">
    <property type="term" value="P:lateral mesoderm development"/>
    <property type="evidence" value="ECO:0000266"/>
    <property type="project" value="RGD"/>
</dbReference>
<dbReference type="GO" id="GO:0060487">
    <property type="term" value="P:lung epithelial cell differentiation"/>
    <property type="evidence" value="ECO:0000266"/>
    <property type="project" value="RGD"/>
</dbReference>
<dbReference type="GO" id="GO:1902018">
    <property type="term" value="P:negative regulation of cilium assembly"/>
    <property type="evidence" value="ECO:0000250"/>
    <property type="project" value="UniProtKB"/>
</dbReference>
<dbReference type="GO" id="GO:1904036">
    <property type="term" value="P:negative regulation of epithelial cell apoptotic process"/>
    <property type="evidence" value="ECO:0000266"/>
    <property type="project" value="RGD"/>
</dbReference>
<dbReference type="GO" id="GO:0030857">
    <property type="term" value="P:negative regulation of epithelial cell differentiation"/>
    <property type="evidence" value="ECO:0000266"/>
    <property type="project" value="RGD"/>
</dbReference>
<dbReference type="GO" id="GO:2001237">
    <property type="term" value="P:negative regulation of extrinsic apoptotic signaling pathway"/>
    <property type="evidence" value="ECO:0000266"/>
    <property type="project" value="RGD"/>
</dbReference>
<dbReference type="GO" id="GO:0045599">
    <property type="term" value="P:negative regulation of fat cell differentiation"/>
    <property type="evidence" value="ECO:0000266"/>
    <property type="project" value="RGD"/>
</dbReference>
<dbReference type="GO" id="GO:0010629">
    <property type="term" value="P:negative regulation of gene expression"/>
    <property type="evidence" value="ECO:0000266"/>
    <property type="project" value="RGD"/>
</dbReference>
<dbReference type="GO" id="GO:2000737">
    <property type="term" value="P:negative regulation of stem cell differentiation"/>
    <property type="evidence" value="ECO:0000266"/>
    <property type="project" value="RGD"/>
</dbReference>
<dbReference type="GO" id="GO:0000122">
    <property type="term" value="P:negative regulation of transcription by RNA polymerase II"/>
    <property type="evidence" value="ECO:0000250"/>
    <property type="project" value="UniProtKB"/>
</dbReference>
<dbReference type="GO" id="GO:0030903">
    <property type="term" value="P:notochord development"/>
    <property type="evidence" value="ECO:0000266"/>
    <property type="project" value="RGD"/>
</dbReference>
<dbReference type="GO" id="GO:0035265">
    <property type="term" value="P:organ growth"/>
    <property type="evidence" value="ECO:0000250"/>
    <property type="project" value="UniProtKB"/>
</dbReference>
<dbReference type="GO" id="GO:0048339">
    <property type="term" value="P:paraxial mesoderm development"/>
    <property type="evidence" value="ECO:0000266"/>
    <property type="project" value="RGD"/>
</dbReference>
<dbReference type="GO" id="GO:0090263">
    <property type="term" value="P:positive regulation of canonical Wnt signaling pathway"/>
    <property type="evidence" value="ECO:0000266"/>
    <property type="project" value="RGD"/>
</dbReference>
<dbReference type="GO" id="GO:0060045">
    <property type="term" value="P:positive regulation of cardiac muscle cell proliferation"/>
    <property type="evidence" value="ECO:0000266"/>
    <property type="project" value="RGD"/>
</dbReference>
<dbReference type="GO" id="GO:0030307">
    <property type="term" value="P:positive regulation of cell growth"/>
    <property type="evidence" value="ECO:0000266"/>
    <property type="project" value="RGD"/>
</dbReference>
<dbReference type="GO" id="GO:0008284">
    <property type="term" value="P:positive regulation of cell population proliferation"/>
    <property type="evidence" value="ECO:0000266"/>
    <property type="project" value="RGD"/>
</dbReference>
<dbReference type="GO" id="GO:0045893">
    <property type="term" value="P:positive regulation of DNA-templated transcription"/>
    <property type="evidence" value="ECO:0000266"/>
    <property type="project" value="RGD"/>
</dbReference>
<dbReference type="GO" id="GO:0050679">
    <property type="term" value="P:positive regulation of epithelial cell proliferation"/>
    <property type="evidence" value="ECO:0000266"/>
    <property type="project" value="RGD"/>
</dbReference>
<dbReference type="GO" id="GO:0010628">
    <property type="term" value="P:positive regulation of gene expression"/>
    <property type="evidence" value="ECO:0000266"/>
    <property type="project" value="RGD"/>
</dbReference>
<dbReference type="GO" id="GO:0045747">
    <property type="term" value="P:positive regulation of Notch signaling pathway"/>
    <property type="evidence" value="ECO:0000266"/>
    <property type="project" value="RGD"/>
</dbReference>
<dbReference type="GO" id="GO:0046622">
    <property type="term" value="P:positive regulation of organ growth"/>
    <property type="evidence" value="ECO:0000266"/>
    <property type="project" value="RGD"/>
</dbReference>
<dbReference type="GO" id="GO:0045669">
    <property type="term" value="P:positive regulation of osteoblast differentiation"/>
    <property type="evidence" value="ECO:0000266"/>
    <property type="project" value="RGD"/>
</dbReference>
<dbReference type="GO" id="GO:1900182">
    <property type="term" value="P:positive regulation of protein localization to nucleus"/>
    <property type="evidence" value="ECO:0000250"/>
    <property type="project" value="UniProtKB"/>
</dbReference>
<dbReference type="GO" id="GO:1902459">
    <property type="term" value="P:positive regulation of stem cell population maintenance"/>
    <property type="evidence" value="ECO:0000266"/>
    <property type="project" value="RGD"/>
</dbReference>
<dbReference type="GO" id="GO:0045944">
    <property type="term" value="P:positive regulation of transcription by RNA polymerase II"/>
    <property type="evidence" value="ECO:0000266"/>
    <property type="project" value="RGD"/>
</dbReference>
<dbReference type="GO" id="GO:0065003">
    <property type="term" value="P:protein-containing complex assembly"/>
    <property type="evidence" value="ECO:0000266"/>
    <property type="project" value="RGD"/>
</dbReference>
<dbReference type="GO" id="GO:0060828">
    <property type="term" value="P:regulation of canonical Wnt signaling pathway"/>
    <property type="evidence" value="ECO:0000266"/>
    <property type="project" value="RGD"/>
</dbReference>
<dbReference type="GO" id="GO:0042127">
    <property type="term" value="P:regulation of cell population proliferation"/>
    <property type="evidence" value="ECO:0000266"/>
    <property type="project" value="RGD"/>
</dbReference>
<dbReference type="GO" id="GO:0010468">
    <property type="term" value="P:regulation of gene expression"/>
    <property type="evidence" value="ECO:0000266"/>
    <property type="project" value="RGD"/>
</dbReference>
<dbReference type="GO" id="GO:0010837">
    <property type="term" value="P:regulation of keratinocyte proliferation"/>
    <property type="evidence" value="ECO:0000266"/>
    <property type="project" value="RGD"/>
</dbReference>
<dbReference type="GO" id="GO:0072307">
    <property type="term" value="P:regulation of metanephric nephron tubule epithelial cell differentiation"/>
    <property type="evidence" value="ECO:0000266"/>
    <property type="project" value="RGD"/>
</dbReference>
<dbReference type="GO" id="GO:0050767">
    <property type="term" value="P:regulation of neurogenesis"/>
    <property type="evidence" value="ECO:0000266"/>
    <property type="project" value="RGD"/>
</dbReference>
<dbReference type="GO" id="GO:0072091">
    <property type="term" value="P:regulation of stem cell proliferation"/>
    <property type="evidence" value="ECO:0000266"/>
    <property type="project" value="RGD"/>
</dbReference>
<dbReference type="GO" id="GO:0032570">
    <property type="term" value="P:response to progesterone"/>
    <property type="evidence" value="ECO:0000266"/>
    <property type="project" value="RGD"/>
</dbReference>
<dbReference type="GO" id="GO:0042770">
    <property type="term" value="P:signal transduction in response to DNA damage"/>
    <property type="evidence" value="ECO:0000250"/>
    <property type="project" value="UniProtKB"/>
</dbReference>
<dbReference type="GO" id="GO:0035019">
    <property type="term" value="P:somatic stem cell population maintenance"/>
    <property type="evidence" value="ECO:0000266"/>
    <property type="project" value="RGD"/>
</dbReference>
<dbReference type="GO" id="GO:0001894">
    <property type="term" value="P:tissue homeostasis"/>
    <property type="evidence" value="ECO:0000266"/>
    <property type="project" value="RGD"/>
</dbReference>
<dbReference type="GO" id="GO:0001829">
    <property type="term" value="P:trophectodermal cell differentiation"/>
    <property type="evidence" value="ECO:0000266"/>
    <property type="project" value="RGD"/>
</dbReference>
<dbReference type="GO" id="GO:0001570">
    <property type="term" value="P:vasculogenesis"/>
    <property type="evidence" value="ECO:0000266"/>
    <property type="project" value="RGD"/>
</dbReference>
<dbReference type="GO" id="GO:0042060">
    <property type="term" value="P:wound healing"/>
    <property type="evidence" value="ECO:0000266"/>
    <property type="project" value="RGD"/>
</dbReference>
<dbReference type="CDD" id="cd00201">
    <property type="entry name" value="WW"/>
    <property type="match status" value="2"/>
</dbReference>
<dbReference type="FunFam" id="2.20.70.10:FF:000019">
    <property type="entry name" value="Putative transcriptional coactivator YAP1"/>
    <property type="match status" value="1"/>
</dbReference>
<dbReference type="FunFam" id="2.20.70.10:FF:000012">
    <property type="entry name" value="transcriptional coactivator YAP1 isoform X2"/>
    <property type="match status" value="1"/>
</dbReference>
<dbReference type="Gene3D" id="2.20.70.10">
    <property type="match status" value="2"/>
</dbReference>
<dbReference type="Gene3D" id="6.20.430.10">
    <property type="match status" value="1"/>
</dbReference>
<dbReference type="InterPro" id="IPR053819">
    <property type="entry name" value="TEADIR3_omega_loop"/>
</dbReference>
<dbReference type="InterPro" id="IPR001202">
    <property type="entry name" value="WW_dom"/>
</dbReference>
<dbReference type="InterPro" id="IPR036020">
    <property type="entry name" value="WW_dom_sf"/>
</dbReference>
<dbReference type="InterPro" id="IPR051583">
    <property type="entry name" value="YAP1"/>
</dbReference>
<dbReference type="PANTHER" id="PTHR17616:SF9">
    <property type="entry name" value="TRANSCRIPTIONAL COACTIVATOR YAP1"/>
    <property type="match status" value="1"/>
</dbReference>
<dbReference type="PANTHER" id="PTHR17616">
    <property type="entry name" value="YES-ASSOCIATED PROTEIN YAP1 FAMILY MEMBER"/>
    <property type="match status" value="1"/>
</dbReference>
<dbReference type="Pfam" id="PF15238">
    <property type="entry name" value="TEADIR3"/>
    <property type="match status" value="1"/>
</dbReference>
<dbReference type="Pfam" id="PF00397">
    <property type="entry name" value="WW"/>
    <property type="match status" value="2"/>
</dbReference>
<dbReference type="SMART" id="SM00456">
    <property type="entry name" value="WW"/>
    <property type="match status" value="2"/>
</dbReference>
<dbReference type="SUPFAM" id="SSF51045">
    <property type="entry name" value="WW domain"/>
    <property type="match status" value="2"/>
</dbReference>
<dbReference type="PROSITE" id="PS01159">
    <property type="entry name" value="WW_DOMAIN_1"/>
    <property type="match status" value="2"/>
</dbReference>
<dbReference type="PROSITE" id="PS50020">
    <property type="entry name" value="WW_DOMAIN_2"/>
    <property type="match status" value="2"/>
</dbReference>
<protein>
    <recommendedName>
        <fullName>Transcriptional coactivator YAP1</fullName>
        <shortName>Yes-associated protein 1</shortName>
    </recommendedName>
    <alternativeName>
        <fullName>Protein yorkie homolog</fullName>
    </alternativeName>
    <alternativeName>
        <fullName>Yes-associated protein YAP65 homolog</fullName>
    </alternativeName>
</protein>
<evidence type="ECO:0000250" key="1"/>
<evidence type="ECO:0000250" key="2">
    <source>
        <dbReference type="UniProtKB" id="A0A8C0NGY6"/>
    </source>
</evidence>
<evidence type="ECO:0000250" key="3">
    <source>
        <dbReference type="UniProtKB" id="P46937"/>
    </source>
</evidence>
<evidence type="ECO:0000250" key="4">
    <source>
        <dbReference type="UniProtKB" id="P46938"/>
    </source>
</evidence>
<evidence type="ECO:0000255" key="5"/>
<evidence type="ECO:0000255" key="6">
    <source>
        <dbReference type="PROSITE-ProRule" id="PRU00224"/>
    </source>
</evidence>
<evidence type="ECO:0000256" key="7">
    <source>
        <dbReference type="SAM" id="MobiDB-lite"/>
    </source>
</evidence>
<evidence type="ECO:0000269" key="8">
    <source>
    </source>
</evidence>
<evidence type="ECO:0000303" key="9">
    <source>
    </source>
</evidence>
<evidence type="ECO:0000305" key="10"/>
<evidence type="ECO:0007744" key="11">
    <source>
    </source>
</evidence>
<evidence type="ECO:0007744" key="12">
    <source>
    </source>
</evidence>
<comment type="function">
    <text evidence="3 4 8">Transcriptional regulator with dual roles as a coactivator and corepressor. Critical downstream regulatory target in the Hippo signaling pathway, crucial for organ size control and tumor suppression by restricting proliferation and promoting apoptosis (PubMed:16461361). The Hippo signaling pathway core involves a kinase cascade featuring STK3/MST2 and STK4/MST1, along with its regulatory partner SAV1, which phosphorylates and activates LATS1/2 in complex with their regulatory protein, MOB1. This activation leads to the phosphorylation and inactivation of the YAP1 oncoprotein and WWTR1/TAZ. Phosphorylation of YAP1 by LATS1/2 prevents its nuclear translocation, thereby regulating the expression of its target genes. The transcriptional regulation of gene expression requires TEAD transcription factors and modulates cell growth, anchorage-independent growth, and induction of epithelial-mesenchymal transition (EMT). Plays a key role in tissue tension and 3D tissue shape by regulating the cortical actomyosin network, acting via ARHGAP18, a Rho GTPase activating protein that suppresses F-actin polymerization. It also suppresses ciliogenesis by acting as a transcriptional corepressor of TEAD4 target genes AURKA and PLK1 (By similarity). In conjunction with WWTR1, regulates TGFB1-dependent SMAD2 and SMAD3 nuclear accumulation (By similarity). Synergizes with WBP2 to enhance PGR activity (By similarity).</text>
</comment>
<comment type="function">
    <molecule>Isoform 4</molecule>
    <text evidence="8">Attenuates p73-mediated cell death signaling in transcriptional repression-induced atypical death (TRIAD) of neurons.</text>
</comment>
<comment type="function">
    <molecule>Isoform 3</molecule>
    <text evidence="8">Attenuates p73-mediated cell death signaling in transcriptional repression-induced atypical death (TRIAD) of neurons.</text>
</comment>
<comment type="function">
    <molecule>Isoform 2</molecule>
    <text evidence="8">Attenuates p73-mediated cell death signaling in transcriptional repression-induced atypical death (TRIAD) of neurons.</text>
</comment>
<comment type="subunit">
    <text evidence="3 4">Part of a complex when phosphorylated that contains DSG3, PKP1, YAP1 and YWHAG; the complex is required for localization of DSG3 and YAP1 to the cell membrane in keratinocytes (By similarity). Binds to the SH3 domain of the YES kinase. Binds to WBP1 and WBP2. Binds, in vitro, through the WW1 domain, to neural isoforms of ENAH that contain the PPSY motif (By similarity). The phosphorylated form interacts with YWHAB. Interacts (via WW domains) with LATS1 (via PPxY motif 2). Interacts with LATS2. Interacts (via WW domain 1) with ERBB4 (via PPxY motif 2). Interacts with TEAD1, TEAD2, TEAD3 and TEAD4. Interacts with TP73. Interacts with RUNX1. Interacts with HCK. Interacts (via WW domains) with PTPN14 (via PPxY motif 2); this interaction leads to the cytoplasmic sequestration of YAP1 and inhibits its transcriptional coactivator activity (By similarity). Interacts (when phosphorylated at Ser-112) with SMAD2, SMAD3 and WWTR1 (By similarity). Interacts with PRRG2 (via cytoplasmic domain) (By similarity). Interacts (via WW domains) with PRRG4 (via cytoplasmic domain) (By similarity). Interacts (phosphorylated) with CLDN18; the interaction sequesters YAP1 away from the nucleus and thereby restricts transcription of YAP1 target genes (By similarity). Interacts with SMAD1 (By similarity). Interacts with AMOT; the interaction facilitates translocation of YAP1 to the cytoplasm and tight junctions (By similarity). Interacts with AMOTL2, the interaction is required for ubiquitination of AMOTL2 and localization of YAP1 to tight junctions (By similarity).</text>
</comment>
<comment type="subcellular location">
    <subcellularLocation>
        <location evidence="3">Cytoplasm</location>
    </subcellularLocation>
    <subcellularLocation>
        <location evidence="3">Nucleus</location>
    </subcellularLocation>
    <subcellularLocation>
        <location evidence="2">Cell junction</location>
        <location evidence="2">Tight junction</location>
    </subcellularLocation>
    <subcellularLocation>
        <location evidence="3">Cell membrane</location>
    </subcellularLocation>
    <text evidence="2 3 4">Both phosphorylation and cell density can regulate its subcellular localization (By similarity). Phosphorylation sequesters it in the cytoplasm by inhibiting its translocation into the nucleus (By similarity). At low density, predominantly nuclear and is translocated to the cytoplasm at high density. PTPN14 induces translocation from the nucleus to the cytoplasm (By similarity). In the nucleus, phosphorylation by PRP4K induces nuclear exclusion (By similarity). Localized mainly to the nucleus in the early stages of embryo development with expression becoming evident in the cytoplasm at the blastocyst and epiblast stages (By similarity). Localizes to the cytoplasm and tight junctions following interaction with AMOT (By similarity). Localizes to tight junctions following interaction with AMOTL2 (By similarity). Translocates to the nucleus in the presence of SNAIL1 (By similarity). Found at the cell membrane in keratinocytes in response to mechanical strain (By similarity).</text>
</comment>
<comment type="alternative products">
    <event type="alternative splicing"/>
    <isoform>
        <id>Q2EJA0-1</id>
        <name>1</name>
        <sequence type="displayed"/>
    </isoform>
    <isoform>
        <id>Q2EJA0-2</id>
        <name>2</name>
        <name>Neuron-specific YAPdeltaC insert25 isoform</name>
        <sequence type="described" ref="VSP_039048 VSP_039051"/>
    </isoform>
    <isoform>
        <id>Q2EJA0-3</id>
        <name>3</name>
        <name>Neuron-specific YAPdeltaC insert61 isoform</name>
        <sequence type="described" ref="VSP_039047 VSP_039052"/>
    </isoform>
    <isoform>
        <id>Q2EJA0-4</id>
        <name>4</name>
        <name>Neuron-specific YAPdeltaC insert13 isoform</name>
        <sequence type="described" ref="VSP_039049 VSP_039050"/>
    </isoform>
    <text>Additional isoforms may exist.</text>
</comment>
<comment type="tissue specificity">
    <molecule>Isoform 3</molecule>
    <text evidence="8">Highly specific to cortical neurons.</text>
</comment>
<comment type="induction">
    <text evidence="8">Down-regulated by alpha-amanitin (AMA).</text>
</comment>
<comment type="domain">
    <text evidence="3">The first coiled-coil region mediates most of the interaction with TEAD transcription factors.</text>
</comment>
<comment type="PTM">
    <text evidence="3">Phosphorylated by LATS1 and LATS2; leading to cytoplasmic translocation and inactivation. Phosphorylated by ABL1; leading to YAP1 stabilization, enhanced interaction with TP73 and recruitment onto proapoptotic genes; in response to DNA damage. Phosphorylation at Ser-366 and Ser-369 by CK1 is triggered by previous phosphorylation at Ser-363 by LATS proteins and leads to YAP1 ubiquitination by SCF(beta-TRCP) E3 ubiquitin ligase and subsequent degradation (By similarity). Phosphorylated at Thr-104, Thr-136, Ser-333 and Thr-378 by MAPK8/JNK1 and MAPK9/JNK2, which is required for the regulation of apoptosis by YAP1 (By similarity).</text>
</comment>
<comment type="PTM">
    <text evidence="3">Lactylation by AARS1 promotes nuclear localization and stabilization of YAP1, leading to increased Hippo signaling pathway. Delactylated by SIRT1.</text>
</comment>
<comment type="PTM">
    <text evidence="3">Ubiquitinated by SCF(beta-TRCP) E3 ubiquitin ligase.</text>
</comment>
<comment type="similarity">
    <text evidence="10">Belongs to the YAP1 family.</text>
</comment>
<feature type="chain" id="PRO_0000393772" description="Transcriptional coactivator YAP1">
    <location>
        <begin position="1"/>
        <end position="469"/>
    </location>
</feature>
<feature type="domain" description="WW 1" evidence="6">
    <location>
        <begin position="153"/>
        <end position="186"/>
    </location>
</feature>
<feature type="domain" description="WW 2" evidence="6">
    <location>
        <begin position="212"/>
        <end position="245"/>
    </location>
</feature>
<feature type="region of interest" description="Disordered" evidence="7">
    <location>
        <begin position="1"/>
        <end position="47"/>
    </location>
</feature>
<feature type="region of interest" description="Disordered" evidence="7">
    <location>
        <begin position="76"/>
        <end position="99"/>
    </location>
</feature>
<feature type="region of interest" description="Disordered" evidence="7">
    <location>
        <begin position="258"/>
        <end position="290"/>
    </location>
</feature>
<feature type="region of interest" description="Transactivation domain">
    <location>
        <begin position="273"/>
        <end position="469"/>
    </location>
</feature>
<feature type="region of interest" description="Disordered" evidence="7">
    <location>
        <begin position="345"/>
        <end position="405"/>
    </location>
</feature>
<feature type="coiled-coil region" evidence="1">
    <location>
        <begin position="71"/>
        <end position="85"/>
    </location>
</feature>
<feature type="coiled-coil region" evidence="5">
    <location>
        <begin position="280"/>
        <end position="325"/>
    </location>
</feature>
<feature type="compositionally biased region" description="Pro residues" evidence="7">
    <location>
        <begin position="1"/>
        <end position="21"/>
    </location>
</feature>
<feature type="compositionally biased region" description="Polar residues" evidence="7">
    <location>
        <begin position="345"/>
        <end position="357"/>
    </location>
</feature>
<feature type="compositionally biased region" description="Polar residues" evidence="7">
    <location>
        <begin position="365"/>
        <end position="375"/>
    </location>
</feature>
<feature type="compositionally biased region" description="Polar residues" evidence="7">
    <location>
        <begin position="393"/>
        <end position="405"/>
    </location>
</feature>
<feature type="modified residue" description="Phosphoserine" evidence="12">
    <location>
        <position position="46"/>
    </location>
</feature>
<feature type="modified residue" description="Phosphothreonine" evidence="3">
    <location>
        <position position="48"/>
    </location>
</feature>
<feature type="modified residue" description="N6-lactoyllysine" evidence="3">
    <location>
        <position position="75"/>
    </location>
</feature>
<feature type="modified residue" description="Phosphoserine" evidence="12">
    <location>
        <position position="90"/>
    </location>
</feature>
<feature type="modified residue" description="Phosphoserine" evidence="11 12">
    <location>
        <position position="94"/>
    </location>
</feature>
<feature type="modified residue" description="Phosphothreonine" evidence="11">
    <location>
        <position position="95"/>
    </location>
</feature>
<feature type="modified residue" description="Phosphothreonine" evidence="12">
    <location>
        <position position="104"/>
    </location>
</feature>
<feature type="modified residue" description="Phosphoserine; by LATS1 and LATS2" evidence="3">
    <location>
        <position position="112"/>
    </location>
</feature>
<feature type="modified residue" description="Phosphoserine" evidence="3">
    <location>
        <position position="113"/>
    </location>
</feature>
<feature type="modified residue" description="Phosphoserine" evidence="3">
    <location>
        <position position="116"/>
    </location>
</feature>
<feature type="modified residue" description="Phosphothreonine; by MAPK8 and MAPK9" evidence="3">
    <location>
        <position position="136"/>
    </location>
</feature>
<feature type="modified residue" description="Phosphoserine; by LATS1 and LATS2" evidence="3">
    <location>
        <position position="146"/>
    </location>
</feature>
<feature type="modified residue" description="Phosphoserine" evidence="3">
    <location>
        <position position="271"/>
    </location>
</feature>
<feature type="modified residue" description="Phosphoserine" evidence="12">
    <location>
        <position position="320"/>
    </location>
</feature>
<feature type="modified residue" description="Phosphoserine; by MAPK8 and MAPK9" evidence="3">
    <location>
        <position position="333"/>
    </location>
</feature>
<feature type="modified residue" description="Phosphoserine" evidence="3">
    <location>
        <position position="347"/>
    </location>
</feature>
<feature type="modified residue" description="Phosphoserine" evidence="3">
    <location>
        <position position="348"/>
    </location>
</feature>
<feature type="modified residue" description="Phosphoserine" evidence="3">
    <location>
        <position position="354"/>
    </location>
</feature>
<feature type="modified residue" description="Phosphoserine; by LATS1 and LATS2" evidence="3">
    <location>
        <position position="363"/>
    </location>
</feature>
<feature type="modified residue" description="Phosphoserine; by CK1" evidence="3">
    <location>
        <position position="366"/>
    </location>
</feature>
<feature type="modified residue" description="Phosphoserine; by CK1" evidence="3">
    <location>
        <position position="369"/>
    </location>
</feature>
<feature type="modified residue" description="Phosphotyrosine; by ABL1" evidence="3">
    <location>
        <position position="373"/>
    </location>
</feature>
<feature type="modified residue" description="Phosphothreonine; by MAPK8 and MAPK9" evidence="3">
    <location>
        <position position="378"/>
    </location>
</feature>
<feature type="splice variant" id="VSP_039047" description="In isoform 3." evidence="9">
    <original>ELALRSQLPSLEQDGGTQNAVSSPGMTQELRTMTTNSSDPFLNSGTYHSRDESTDS</original>
    <variation>AIRNINPSTANAPKCQTVRAGISSPQPVALTGAGWRDSECSVFSRDDSGIEDNDNQ</variation>
    <location>
        <begin position="311"/>
        <end position="366"/>
    </location>
</feature>
<feature type="splice variant" id="VSP_039048" description="In isoform 2." evidence="9">
    <original>ELALRSQLPSLEQDGGTQNAVSSPGMTQELRTMTTNSSDPFLNS</original>
    <variation>VRPQTVRAGISSPQPVALTGAGWRDSECSVFSRDDSGIEDNDNQ</variation>
    <location>
        <begin position="311"/>
        <end position="354"/>
    </location>
</feature>
<feature type="splice variant" id="VSP_039049" description="In isoform 4." evidence="9">
    <original>ELALRSQLPSLEQDGGTQNAVSSPGMTQELRTMTTNSSDP</original>
    <variation>TVRAGISSPQPVALTGAGWRDSECSVFSRDDSGIEDNDNQ</variation>
    <location>
        <begin position="311"/>
        <end position="350"/>
    </location>
</feature>
<feature type="splice variant" id="VSP_039050" description="In isoform 4." evidence="9">
    <location>
        <begin position="351"/>
        <end position="469"/>
    </location>
</feature>
<feature type="splice variant" id="VSP_039051" description="In isoform 2." evidence="9">
    <location>
        <begin position="355"/>
        <end position="469"/>
    </location>
</feature>
<feature type="splice variant" id="VSP_039052" description="In isoform 3." evidence="9">
    <location>
        <begin position="367"/>
        <end position="469"/>
    </location>
</feature>